<gene>
    <name evidence="1" type="primary">rplO</name>
    <name type="ordered locus">SPP_0279</name>
</gene>
<feature type="chain" id="PRO_1000166319" description="Large ribosomal subunit protein uL15">
    <location>
        <begin position="1"/>
        <end position="146"/>
    </location>
</feature>
<feature type="region of interest" description="Disordered" evidence="2">
    <location>
        <begin position="1"/>
        <end position="51"/>
    </location>
</feature>
<feature type="compositionally biased region" description="Basic and acidic residues" evidence="2">
    <location>
        <begin position="1"/>
        <end position="13"/>
    </location>
</feature>
<feature type="compositionally biased region" description="Gly residues" evidence="2">
    <location>
        <begin position="23"/>
        <end position="35"/>
    </location>
</feature>
<feature type="compositionally biased region" description="Gly residues" evidence="2">
    <location>
        <begin position="42"/>
        <end position="51"/>
    </location>
</feature>
<comment type="function">
    <text evidence="1">Binds to the 23S rRNA.</text>
</comment>
<comment type="subunit">
    <text evidence="1">Part of the 50S ribosomal subunit.</text>
</comment>
<comment type="similarity">
    <text evidence="1">Belongs to the universal ribosomal protein uL15 family.</text>
</comment>
<protein>
    <recommendedName>
        <fullName evidence="1">Large ribosomal subunit protein uL15</fullName>
    </recommendedName>
    <alternativeName>
        <fullName evidence="3">50S ribosomal protein L15</fullName>
    </alternativeName>
</protein>
<sequence length="146" mass="15446">MKLHELKPAEGSRKVRNRVGRGTSSGNGKTSGRGQKGQKARSGGGVRLGFEGGQTPLFRRLPKRGFTNINAKEYAIVNLDQLNVFEDGAEVTPVVLIEAGIVKAEKSGIKILGNGELTKKLTVKAAKFSKSAEEAITAKGGSVEVI</sequence>
<reference key="1">
    <citation type="journal article" date="2010" name="Genome Biol.">
        <title>Structure and dynamics of the pan-genome of Streptococcus pneumoniae and closely related species.</title>
        <authorList>
            <person name="Donati C."/>
            <person name="Hiller N.L."/>
            <person name="Tettelin H."/>
            <person name="Muzzi A."/>
            <person name="Croucher N.J."/>
            <person name="Angiuoli S.V."/>
            <person name="Oggioni M."/>
            <person name="Dunning Hotopp J.C."/>
            <person name="Hu F.Z."/>
            <person name="Riley D.R."/>
            <person name="Covacci A."/>
            <person name="Mitchell T.J."/>
            <person name="Bentley S.D."/>
            <person name="Kilian M."/>
            <person name="Ehrlich G.D."/>
            <person name="Rappuoli R."/>
            <person name="Moxon E.R."/>
            <person name="Masignani V."/>
        </authorList>
    </citation>
    <scope>NUCLEOTIDE SEQUENCE [LARGE SCALE GENOMIC DNA]</scope>
    <source>
        <strain>P1031</strain>
    </source>
</reference>
<dbReference type="EMBL" id="CP000920">
    <property type="protein sequence ID" value="ACO21109.1"/>
    <property type="molecule type" value="Genomic_DNA"/>
</dbReference>
<dbReference type="RefSeq" id="WP_000766087.1">
    <property type="nucleotide sequence ID" value="NC_012467.1"/>
</dbReference>
<dbReference type="SMR" id="C1CIB6"/>
<dbReference type="GeneID" id="45652290"/>
<dbReference type="KEGG" id="spp:SPP_0279"/>
<dbReference type="HOGENOM" id="CLU_055188_4_2_9"/>
<dbReference type="GO" id="GO:0022625">
    <property type="term" value="C:cytosolic large ribosomal subunit"/>
    <property type="evidence" value="ECO:0007669"/>
    <property type="project" value="TreeGrafter"/>
</dbReference>
<dbReference type="GO" id="GO:0019843">
    <property type="term" value="F:rRNA binding"/>
    <property type="evidence" value="ECO:0007669"/>
    <property type="project" value="UniProtKB-UniRule"/>
</dbReference>
<dbReference type="GO" id="GO:0003735">
    <property type="term" value="F:structural constituent of ribosome"/>
    <property type="evidence" value="ECO:0007669"/>
    <property type="project" value="InterPro"/>
</dbReference>
<dbReference type="GO" id="GO:0006412">
    <property type="term" value="P:translation"/>
    <property type="evidence" value="ECO:0007669"/>
    <property type="project" value="UniProtKB-UniRule"/>
</dbReference>
<dbReference type="FunFam" id="3.100.10.10:FF:000004">
    <property type="entry name" value="50S ribosomal protein L15"/>
    <property type="match status" value="1"/>
</dbReference>
<dbReference type="Gene3D" id="3.100.10.10">
    <property type="match status" value="1"/>
</dbReference>
<dbReference type="HAMAP" id="MF_01341">
    <property type="entry name" value="Ribosomal_uL15"/>
    <property type="match status" value="1"/>
</dbReference>
<dbReference type="InterPro" id="IPR030878">
    <property type="entry name" value="Ribosomal_uL15"/>
</dbReference>
<dbReference type="InterPro" id="IPR021131">
    <property type="entry name" value="Ribosomal_uL15/eL18"/>
</dbReference>
<dbReference type="InterPro" id="IPR036227">
    <property type="entry name" value="Ribosomal_uL15/eL18_sf"/>
</dbReference>
<dbReference type="InterPro" id="IPR005749">
    <property type="entry name" value="Ribosomal_uL15_bac-type"/>
</dbReference>
<dbReference type="InterPro" id="IPR001196">
    <property type="entry name" value="Ribosomal_uL15_CS"/>
</dbReference>
<dbReference type="NCBIfam" id="TIGR01071">
    <property type="entry name" value="rplO_bact"/>
    <property type="match status" value="1"/>
</dbReference>
<dbReference type="PANTHER" id="PTHR12934">
    <property type="entry name" value="50S RIBOSOMAL PROTEIN L15"/>
    <property type="match status" value="1"/>
</dbReference>
<dbReference type="PANTHER" id="PTHR12934:SF11">
    <property type="entry name" value="LARGE RIBOSOMAL SUBUNIT PROTEIN UL15M"/>
    <property type="match status" value="1"/>
</dbReference>
<dbReference type="Pfam" id="PF00828">
    <property type="entry name" value="Ribosomal_L27A"/>
    <property type="match status" value="1"/>
</dbReference>
<dbReference type="SUPFAM" id="SSF52080">
    <property type="entry name" value="Ribosomal proteins L15p and L18e"/>
    <property type="match status" value="1"/>
</dbReference>
<dbReference type="PROSITE" id="PS00475">
    <property type="entry name" value="RIBOSOMAL_L15"/>
    <property type="match status" value="1"/>
</dbReference>
<organism>
    <name type="scientific">Streptococcus pneumoniae (strain P1031)</name>
    <dbReference type="NCBI Taxonomy" id="488223"/>
    <lineage>
        <taxon>Bacteria</taxon>
        <taxon>Bacillati</taxon>
        <taxon>Bacillota</taxon>
        <taxon>Bacilli</taxon>
        <taxon>Lactobacillales</taxon>
        <taxon>Streptococcaceae</taxon>
        <taxon>Streptococcus</taxon>
    </lineage>
</organism>
<proteinExistence type="inferred from homology"/>
<keyword id="KW-0687">Ribonucleoprotein</keyword>
<keyword id="KW-0689">Ribosomal protein</keyword>
<keyword id="KW-0694">RNA-binding</keyword>
<keyword id="KW-0699">rRNA-binding</keyword>
<accession>C1CIB6</accession>
<evidence type="ECO:0000255" key="1">
    <source>
        <dbReference type="HAMAP-Rule" id="MF_01341"/>
    </source>
</evidence>
<evidence type="ECO:0000256" key="2">
    <source>
        <dbReference type="SAM" id="MobiDB-lite"/>
    </source>
</evidence>
<evidence type="ECO:0000305" key="3"/>
<name>RL15_STRZP</name>